<feature type="chain" id="PRO_0000222203" description="Replication-associated protein">
    <location>
        <begin position="1"/>
        <end position="358"/>
    </location>
</feature>
<feature type="domain" description="CRESS-DNA virus Rep endonuclease" evidence="3">
    <location>
        <begin position="7"/>
        <end position="115"/>
    </location>
</feature>
<feature type="region of interest" description="Binding to RBR1" evidence="1">
    <location>
        <begin position="142"/>
        <end position="152"/>
    </location>
</feature>
<feature type="region of interest" description="Oligomerization" evidence="1">
    <location>
        <begin position="155"/>
        <end position="175"/>
    </location>
</feature>
<feature type="short sequence motif" description="RCR-1" evidence="3">
    <location>
        <begin position="14"/>
        <end position="17"/>
    </location>
</feature>
<feature type="short sequence motif" description="RCR-2" evidence="3">
    <location>
        <begin position="56"/>
        <end position="58"/>
    </location>
</feature>
<feature type="short sequence motif" description="RCR-3" evidence="3">
    <location>
        <begin position="102"/>
        <end position="105"/>
    </location>
</feature>
<feature type="active site" description="For DNA cleavage activity" evidence="3">
    <location>
        <position position="102"/>
    </location>
</feature>
<feature type="binding site" evidence="3">
    <location>
        <position position="48"/>
    </location>
    <ligand>
        <name>a divalent metal cation</name>
        <dbReference type="ChEBI" id="CHEBI:60240"/>
    </ligand>
</feature>
<feature type="binding site" evidence="3">
    <location>
        <position position="56"/>
    </location>
    <ligand>
        <name>a divalent metal cation</name>
        <dbReference type="ChEBI" id="CHEBI:60240"/>
    </ligand>
</feature>
<feature type="binding site" evidence="3">
    <location>
        <position position="58"/>
    </location>
    <ligand>
        <name>a divalent metal cation</name>
        <dbReference type="ChEBI" id="CHEBI:60240"/>
    </ligand>
</feature>
<feature type="binding site" evidence="3">
    <location>
        <position position="106"/>
    </location>
    <ligand>
        <name>a divalent metal cation</name>
        <dbReference type="ChEBI" id="CHEBI:60240"/>
    </ligand>
</feature>
<feature type="binding site" evidence="2">
    <location>
        <begin position="220"/>
        <end position="227"/>
    </location>
    <ligand>
        <name>ATP</name>
        <dbReference type="ChEBI" id="CHEBI:30616"/>
    </ligand>
</feature>
<organismHost>
    <name type="scientific">Hewittia sublobata</name>
    <dbReference type="NCBI Taxonomy" id="197394"/>
</organismHost>
<organismHost>
    <name type="scientific">Jatropha multifida</name>
    <name type="common">Coralbush</name>
    <dbReference type="NCBI Taxonomy" id="3996"/>
</organismHost>
<organismHost>
    <name type="scientific">Laportea</name>
    <dbReference type="NCBI Taxonomy" id="194268"/>
</organismHost>
<organismHost>
    <name type="scientific">Manihot esculenta</name>
    <name type="common">Cassava</name>
    <name type="synonym">Jatropha manihot</name>
    <dbReference type="NCBI Taxonomy" id="3983"/>
</organismHost>
<sequence length="358" mass="40346">MRTPRFRIQAKNVFLTYPKCSIPKEHLLSFIQTLSLQSNPKFIKICRELHQNGEPHLHALIQFEGKITITNNRLFDCVHPSCSTSFHPNIQGAKSSSDVKSYLDKDGDTVEWGQFQIDGRSARGGQQSANDAYAKALNSGSKSEALNVIRELVPKDFVLQFHNLNSNLDRIFQEPPAPYVSPFPCSSFDQVPVEIEEWVADNVRDSAARPWRPNSIVIEGDSRTGKTIWARSLGPHNYLCGHLDLSPKVFNNAAWYNVIDDVDPHYLKHFKEFMGSQRDWQSNTKYGKPVQIKGGIPTIFLCNPGPTSSYKEFLAEEKQEALKAWALKNAIFITLTEPLYSGSNQSHSQTSQEASHPA</sequence>
<keyword id="KW-0067">ATP-binding</keyword>
<keyword id="KW-0190">Covalent protein-DNA linkage</keyword>
<keyword id="KW-0235">DNA replication</keyword>
<keyword id="KW-0238">DNA-binding</keyword>
<keyword id="KW-0255">Endonuclease</keyword>
<keyword id="KW-0347">Helicase</keyword>
<keyword id="KW-1048">Host nucleus</keyword>
<keyword id="KW-0945">Host-virus interaction</keyword>
<keyword id="KW-0378">Hydrolase</keyword>
<keyword id="KW-0479">Metal-binding</keyword>
<keyword id="KW-0511">Multifunctional enzyme</keyword>
<keyword id="KW-0540">Nuclease</keyword>
<keyword id="KW-0547">Nucleotide-binding</keyword>
<keyword id="KW-0548">Nucleotidyltransferase</keyword>
<keyword id="KW-0808">Transferase</keyword>
<comment type="function">
    <text evidence="1">Essential for the replication of viral ssDNA. The closed circular ssDNA genome is first converted to a superhelical dsDNA. Rep binds a specific region at the genome origin of replication. It introduces an endonucleolytic nick within the conserved sequence 5'-TAATATTAC-3' in the intergenic region of the genome present in all geminiviruses, thereby initiating the rolling circle replication (RCR). Following cleavage, binds covalently to the 5'-phosphate of DNA as a tyrosyl ester. The cleavage gives rise to a free 3'-OH that serves as a primer for the cellular DNA polymerase. The polymerase synthesizes the (+) strand DNA by rolling circle mechanism. After one round of replication, a Rep-catalyzed nucleotidyl transfer reaction releases a circular single-stranded virus genome, thereby terminating the replication. Displays origin-specific DNA cleavage, nucleotidyl transferase, ATPase and helicase activities (By similarity).</text>
</comment>
<comment type="cofactor">
    <cofactor evidence="3">
        <name>Mg(2+)</name>
        <dbReference type="ChEBI" id="CHEBI:18420"/>
    </cofactor>
    <cofactor evidence="3">
        <name>Mn(2+)</name>
        <dbReference type="ChEBI" id="CHEBI:29035"/>
    </cofactor>
    <text evidence="3">Divalent metal cations, possibly Mg(2+) or Mn(2+).</text>
</comment>
<comment type="subunit">
    <text evidence="1">Homooligomer. Interacts with the replication enhancer protein (REn). Interacts with host retinoblastoma-related protein 1 (RBR1), and may thereby induce the transcription of host replicative enzymes even if the cell is not dividing anymore. Interacts with host PCNA. Interacts with host SCE1 protein (By similarity).</text>
</comment>
<comment type="subcellular location">
    <subcellularLocation>
        <location evidence="1">Host nucleus</location>
    </subcellularLocation>
</comment>
<comment type="domain">
    <text evidence="1">There are 3 rolling circle replication (RCR) motifs. RCR-2 is probably involved in metal coordination. RCR-3 is required for phosphodiester bond cleavage for initiation of RCR (By similarity).</text>
</comment>
<comment type="similarity">
    <text evidence="4">Belongs to the geminiviridae Rep protein family.</text>
</comment>
<gene>
    <name type="ORF">AC1</name>
    <name type="ORF">AL1</name>
</gene>
<accession>P14982</accession>
<proteinExistence type="inferred from homology"/>
<evidence type="ECO:0000250" key="1"/>
<evidence type="ECO:0000255" key="2"/>
<evidence type="ECO:0000255" key="3">
    <source>
        <dbReference type="PROSITE-ProRule" id="PRU01364"/>
    </source>
</evidence>
<evidence type="ECO:0000305" key="4"/>
<reference key="1">
    <citation type="journal article" date="1983" name="Nature">
        <title>Nucleotide sequence of cassava latent virus DNA.</title>
        <authorList>
            <person name="Stanley J."/>
            <person name="Gay M.R."/>
        </authorList>
    </citation>
    <scope>NUCLEOTIDE SEQUENCE [GENOMIC DNA]</scope>
</reference>
<dbReference type="EC" id="2.7.7.-"/>
<dbReference type="EC" id="3.1.21.-"/>
<dbReference type="EMBL" id="J02057">
    <property type="status" value="NOT_ANNOTATED_CDS"/>
    <property type="molecule type" value="Genomic_DNA"/>
</dbReference>
<dbReference type="SMR" id="P14982"/>
<dbReference type="Proteomes" id="UP000008452">
    <property type="component" value="Genome"/>
</dbReference>
<dbReference type="GO" id="GO:0042025">
    <property type="term" value="C:host cell nucleus"/>
    <property type="evidence" value="ECO:0007669"/>
    <property type="project" value="UniProtKB-SubCell"/>
</dbReference>
<dbReference type="GO" id="GO:0005524">
    <property type="term" value="F:ATP binding"/>
    <property type="evidence" value="ECO:0007669"/>
    <property type="project" value="UniProtKB-KW"/>
</dbReference>
<dbReference type="GO" id="GO:0003677">
    <property type="term" value="F:DNA binding"/>
    <property type="evidence" value="ECO:0007669"/>
    <property type="project" value="UniProtKB-KW"/>
</dbReference>
<dbReference type="GO" id="GO:0016888">
    <property type="term" value="F:endodeoxyribonuclease activity, producing 5'-phosphomonoesters"/>
    <property type="evidence" value="ECO:0007669"/>
    <property type="project" value="InterPro"/>
</dbReference>
<dbReference type="GO" id="GO:0004386">
    <property type="term" value="F:helicase activity"/>
    <property type="evidence" value="ECO:0007669"/>
    <property type="project" value="UniProtKB-KW"/>
</dbReference>
<dbReference type="GO" id="GO:0046872">
    <property type="term" value="F:metal ion binding"/>
    <property type="evidence" value="ECO:0007669"/>
    <property type="project" value="UniProtKB-KW"/>
</dbReference>
<dbReference type="GO" id="GO:0016779">
    <property type="term" value="F:nucleotidyltransferase activity"/>
    <property type="evidence" value="ECO:0007669"/>
    <property type="project" value="UniProtKB-KW"/>
</dbReference>
<dbReference type="GO" id="GO:0005198">
    <property type="term" value="F:structural molecule activity"/>
    <property type="evidence" value="ECO:0007669"/>
    <property type="project" value="InterPro"/>
</dbReference>
<dbReference type="GO" id="GO:0006260">
    <property type="term" value="P:DNA replication"/>
    <property type="evidence" value="ECO:0007669"/>
    <property type="project" value="UniProtKB-KW"/>
</dbReference>
<dbReference type="Gene3D" id="3.40.1310.20">
    <property type="match status" value="1"/>
</dbReference>
<dbReference type="InterPro" id="IPR049912">
    <property type="entry name" value="CRESS_DNA_REP"/>
</dbReference>
<dbReference type="InterPro" id="IPR001301">
    <property type="entry name" value="Gemini_AL1_CLV"/>
</dbReference>
<dbReference type="InterPro" id="IPR001191">
    <property type="entry name" value="Gemini_AL1_REP"/>
</dbReference>
<dbReference type="InterPro" id="IPR022692">
    <property type="entry name" value="Gemini_AL1_REP_central"/>
</dbReference>
<dbReference type="Pfam" id="PF00799">
    <property type="entry name" value="Gemini_AL1"/>
    <property type="match status" value="1"/>
</dbReference>
<dbReference type="Pfam" id="PF08283">
    <property type="entry name" value="Gemini_AL1_M"/>
    <property type="match status" value="1"/>
</dbReference>
<dbReference type="PRINTS" id="PR00227">
    <property type="entry name" value="GEMCOATAL1"/>
</dbReference>
<dbReference type="PRINTS" id="PR00228">
    <property type="entry name" value="GEMCOATCLVL1"/>
</dbReference>
<dbReference type="SUPFAM" id="SSF55464">
    <property type="entry name" value="Origin of replication-binding domain, RBD-like"/>
    <property type="match status" value="1"/>
</dbReference>
<dbReference type="PROSITE" id="PS52020">
    <property type="entry name" value="CRESS_DNA_REP"/>
    <property type="match status" value="1"/>
</dbReference>
<organism>
    <name type="scientific">African cassava mosaic virus (isolate West Kenyan 844)</name>
    <name type="common">ACMV</name>
    <name type="synonym">Cassava latent virus (isolate West Kenyan 844)</name>
    <dbReference type="NCBI Taxonomy" id="10818"/>
    <lineage>
        <taxon>Viruses</taxon>
        <taxon>Monodnaviria</taxon>
        <taxon>Shotokuvirae</taxon>
        <taxon>Cressdnaviricota</taxon>
        <taxon>Repensiviricetes</taxon>
        <taxon>Geplafuvirales</taxon>
        <taxon>Geminiviridae</taxon>
        <taxon>Begomovirus</taxon>
        <taxon>Begomovirus manihotis</taxon>
    </lineage>
</organism>
<name>REP_CLVK</name>
<protein>
    <recommendedName>
        <fullName>Replication-associated protein</fullName>
        <shortName>Rep</shortName>
        <ecNumber>2.7.7.-</ecNumber>
        <ecNumber>3.1.21.-</ecNumber>
    </recommendedName>
    <alternativeName>
        <fullName>40.4 kDa protein</fullName>
    </alternativeName>
    <alternativeName>
        <fullName>Protein AC1</fullName>
    </alternativeName>
    <alternativeName>
        <fullName>Protein AL1</fullName>
    </alternativeName>
</protein>